<proteinExistence type="evidence at protein level"/>
<sequence>MALKYLLDTSVIKRLSRPAVRRAVEPLAEAGAVARTQITDLEVGYSARNETEWQRLMVALSAFDLIESTASHHRRALGIQRLLAARSQRGRKIPDLLIAAAGEEHGLVVLHYDADFDLIAAVTGQPCQWIVPAGTID</sequence>
<name>VPC51_MYCTU</name>
<protein>
    <recommendedName>
        <fullName evidence="2">Ribonuclease VapC51</fullName>
        <shortName>RNase VapC51</shortName>
        <ecNumber>3.1.-.-</ecNumber>
    </recommendedName>
    <alternativeName>
        <fullName>Toxin VapC51</fullName>
    </alternativeName>
</protein>
<accession>L0T5V6</accession>
<accession>I6Y770</accession>
<evidence type="ECO:0000250" key="1"/>
<evidence type="ECO:0000305" key="2"/>
<dbReference type="EC" id="3.1.-.-"/>
<dbReference type="EMBL" id="AL123456">
    <property type="protein sequence ID" value="CCP42957.1"/>
    <property type="status" value="ALT_INIT"/>
    <property type="molecule type" value="Genomic_DNA"/>
</dbReference>
<dbReference type="EMBL" id="CP003248">
    <property type="protein sequence ID" value="AFN48080.1"/>
    <property type="molecule type" value="Genomic_DNA"/>
</dbReference>
<dbReference type="EMBL" id="JLDD01000001">
    <property type="protein sequence ID" value="KBJ41338.1"/>
    <property type="molecule type" value="Genomic_DNA"/>
</dbReference>
<dbReference type="RefSeq" id="NP_214743.2">
    <property type="nucleotide sequence ID" value="NC_000962.3"/>
</dbReference>
<dbReference type="RefSeq" id="WP_003911071.1">
    <property type="nucleotide sequence ID" value="NZ_NVQJ01000001.1"/>
</dbReference>
<dbReference type="SMR" id="L0T5V6"/>
<dbReference type="STRING" id="83332.Rv0229c"/>
<dbReference type="PaxDb" id="83332-Rv0229c"/>
<dbReference type="DNASU" id="886724"/>
<dbReference type="GeneID" id="886724"/>
<dbReference type="KEGG" id="mtu:Rv0229c"/>
<dbReference type="KEGG" id="mtv:RVBD_0229c"/>
<dbReference type="TubercuList" id="Rv0229c"/>
<dbReference type="eggNOG" id="COG1487">
    <property type="taxonomic scope" value="Bacteria"/>
</dbReference>
<dbReference type="InParanoid" id="L0T5V6"/>
<dbReference type="OrthoDB" id="5185254at2"/>
<dbReference type="Proteomes" id="UP000001584">
    <property type="component" value="Chromosome"/>
</dbReference>
<dbReference type="GO" id="GO:0000287">
    <property type="term" value="F:magnesium ion binding"/>
    <property type="evidence" value="ECO:0007669"/>
    <property type="project" value="UniProtKB-UniRule"/>
</dbReference>
<dbReference type="GO" id="GO:0004521">
    <property type="term" value="F:RNA endonuclease activity"/>
    <property type="evidence" value="ECO:0000318"/>
    <property type="project" value="GO_Central"/>
</dbReference>
<dbReference type="CDD" id="cd18755">
    <property type="entry name" value="PIN_MtVapC3_VapC21-like"/>
    <property type="match status" value="1"/>
</dbReference>
<dbReference type="Gene3D" id="3.40.50.1010">
    <property type="entry name" value="5'-nuclease"/>
    <property type="match status" value="1"/>
</dbReference>
<dbReference type="HAMAP" id="MF_00265">
    <property type="entry name" value="VapC_Nob1"/>
    <property type="match status" value="1"/>
</dbReference>
<dbReference type="InterPro" id="IPR029060">
    <property type="entry name" value="PIN-like_dom_sf"/>
</dbReference>
<dbReference type="InterPro" id="IPR002716">
    <property type="entry name" value="PIN_dom"/>
</dbReference>
<dbReference type="InterPro" id="IPR050556">
    <property type="entry name" value="Type_II_TA_system_RNase"/>
</dbReference>
<dbReference type="InterPro" id="IPR022907">
    <property type="entry name" value="VapC_family"/>
</dbReference>
<dbReference type="PANTHER" id="PTHR33653">
    <property type="entry name" value="RIBONUCLEASE VAPC2"/>
    <property type="match status" value="1"/>
</dbReference>
<dbReference type="PANTHER" id="PTHR33653:SF1">
    <property type="entry name" value="RIBONUCLEASE VAPC2"/>
    <property type="match status" value="1"/>
</dbReference>
<dbReference type="Pfam" id="PF01850">
    <property type="entry name" value="PIN"/>
    <property type="match status" value="1"/>
</dbReference>
<dbReference type="SUPFAM" id="SSF88723">
    <property type="entry name" value="PIN domain-like"/>
    <property type="match status" value="1"/>
</dbReference>
<reference key="1">
    <citation type="journal article" date="1998" name="Nature">
        <title>Deciphering the biology of Mycobacterium tuberculosis from the complete genome sequence.</title>
        <authorList>
            <person name="Cole S.T."/>
            <person name="Brosch R."/>
            <person name="Parkhill J."/>
            <person name="Garnier T."/>
            <person name="Churcher C.M."/>
            <person name="Harris D.E."/>
            <person name="Gordon S.V."/>
            <person name="Eiglmeier K."/>
            <person name="Gas S."/>
            <person name="Barry C.E. III"/>
            <person name="Tekaia F."/>
            <person name="Badcock K."/>
            <person name="Basham D."/>
            <person name="Brown D."/>
            <person name="Chillingworth T."/>
            <person name="Connor R."/>
            <person name="Davies R.M."/>
            <person name="Devlin K."/>
            <person name="Feltwell T."/>
            <person name="Gentles S."/>
            <person name="Hamlin N."/>
            <person name="Holroyd S."/>
            <person name="Hornsby T."/>
            <person name="Jagels K."/>
            <person name="Krogh A."/>
            <person name="McLean J."/>
            <person name="Moule S."/>
            <person name="Murphy L.D."/>
            <person name="Oliver S."/>
            <person name="Osborne J."/>
            <person name="Quail M.A."/>
            <person name="Rajandream M.A."/>
            <person name="Rogers J."/>
            <person name="Rutter S."/>
            <person name="Seeger K."/>
            <person name="Skelton S."/>
            <person name="Squares S."/>
            <person name="Squares R."/>
            <person name="Sulston J.E."/>
            <person name="Taylor K."/>
            <person name="Whitehead S."/>
            <person name="Barrell B.G."/>
        </authorList>
    </citation>
    <scope>NUCLEOTIDE SEQUENCE [LARGE SCALE GENOMIC DNA]</scope>
    <source>
        <strain>ATCC 25618 / H37Rv</strain>
    </source>
</reference>
<reference key="2">
    <citation type="submission" date="2013-11" db="EMBL/GenBank/DDBJ databases">
        <title>The genome sequence of Mycobacterium tuberculosis H37Rv.</title>
        <authorList>
            <consortium name="The Broad Institute Genome Sequencing Platform"/>
            <person name="Galagan J."/>
            <person name="Kreiswirth B."/>
            <person name="Dobos K."/>
            <person name="Fortune S."/>
            <person name="Fitzgerald M."/>
            <person name="Young S.K."/>
            <person name="Zeng Q."/>
            <person name="Gargeya S."/>
            <person name="Abouelleil A."/>
            <person name="Alvarado L."/>
            <person name="Berlin A.M."/>
            <person name="Chapman S.B."/>
            <person name="Gainer-Dewar J."/>
            <person name="Goldberg J."/>
            <person name="Gnerre S."/>
            <person name="Griggs A."/>
            <person name="Gujja S."/>
            <person name="Hansen M."/>
            <person name="Howarth C."/>
            <person name="Imamovic A."/>
            <person name="Larimer J."/>
            <person name="McCowan C."/>
            <person name="Murphy C."/>
            <person name="Pearson M."/>
            <person name="Poon T."/>
            <person name="Priest M."/>
            <person name="Roberts A."/>
            <person name="Saif S."/>
            <person name="Shea T."/>
            <person name="Sykes S."/>
            <person name="Wortman J."/>
            <person name="Nusbaum C."/>
            <person name="Birren B."/>
        </authorList>
    </citation>
    <scope>NUCLEOTIDE SEQUENCE [LARGE SCALE GENOMIC DNA]</scope>
    <source>
        <strain>ATCC 25618 / H37Rv</strain>
    </source>
</reference>
<reference key="3">
    <citation type="submission" date="2014-04" db="EMBL/GenBank/DDBJ databases">
        <title>The genome sequence of Mycobacterium tuberculosis H37Rv.</title>
        <authorList>
            <consortium name="The Broad Institute Genomics Platform"/>
            <consortium name="The Broad Institute Genome Sequencing Center for Infectious Disease"/>
            <person name="Earl A.M."/>
            <person name="Kreiswirth B."/>
            <person name="Gomez J."/>
            <person name="Victor T."/>
            <person name="Desjardins C."/>
            <person name="Abeel T."/>
            <person name="Young S."/>
            <person name="Zeng Q."/>
            <person name="Gargeya S."/>
            <person name="Abouelleil A."/>
            <person name="Alvarado L."/>
            <person name="Chapman S.B."/>
            <person name="Gainer-Dewar J."/>
            <person name="Goldberg J."/>
            <person name="Griggs A."/>
            <person name="Gujja S."/>
            <person name="Hansen M."/>
            <person name="Howarth C."/>
            <person name="Imamovic A."/>
            <person name="Larimer J."/>
            <person name="Murphy C."/>
            <person name="Naylor J."/>
            <person name="Pearson M."/>
            <person name="Poon T.W."/>
            <person name="Priest M."/>
            <person name="Roberts A."/>
            <person name="Saif S."/>
            <person name="Shea T."/>
            <person name="Sykes S."/>
            <person name="Wortman J."/>
            <person name="Nusbaum C."/>
            <person name="Birren B."/>
        </authorList>
    </citation>
    <scope>NUCLEOTIDE SEQUENCE [LARGE SCALE GENOMIC DNA]</scope>
    <source>
        <strain>ATCC 25618 / H37Rv</strain>
    </source>
</reference>
<reference key="4">
    <citation type="journal article" date="2011" name="Mol. Cell. Proteomics">
        <title>Proteogenomic analysis of Mycobacterium tuberculosis by high resolution mass spectrometry.</title>
        <authorList>
            <person name="Kelkar D.S."/>
            <person name="Kumar D."/>
            <person name="Kumar P."/>
            <person name="Balakrishnan L."/>
            <person name="Muthusamy B."/>
            <person name="Yadav A.K."/>
            <person name="Shrivastava P."/>
            <person name="Marimuthu A."/>
            <person name="Anand S."/>
            <person name="Sundaram H."/>
            <person name="Kingsbury R."/>
            <person name="Harsha H.C."/>
            <person name="Nair B."/>
            <person name="Prasad T.S."/>
            <person name="Chauhan D.S."/>
            <person name="Katoch K."/>
            <person name="Katoch V.M."/>
            <person name="Kumar P."/>
            <person name="Chaerkady R."/>
            <person name="Ramachandran S."/>
            <person name="Dash D."/>
            <person name="Pandey A."/>
        </authorList>
    </citation>
    <scope>IDENTIFICATION BY MASS SPECTROMETRY [LARGE SCALE ANALYSIS]</scope>
    <source>
        <strain>ATCC 25618 / H37Rv</strain>
    </source>
</reference>
<feature type="chain" id="PRO_0000430096" description="Ribonuclease VapC51">
    <location>
        <begin position="1"/>
        <end position="137"/>
    </location>
</feature>
<feature type="domain" description="PINc">
    <location>
        <begin position="5"/>
        <end position="120"/>
    </location>
</feature>
<feature type="binding site" evidence="1">
    <location>
        <position position="8"/>
    </location>
    <ligand>
        <name>Mg(2+)</name>
        <dbReference type="ChEBI" id="CHEBI:18420"/>
    </ligand>
</feature>
<feature type="binding site" evidence="1">
    <location>
        <position position="95"/>
    </location>
    <ligand>
        <name>Mg(2+)</name>
        <dbReference type="ChEBI" id="CHEBI:18420"/>
    </ligand>
</feature>
<organism>
    <name type="scientific">Mycobacterium tuberculosis (strain ATCC 25618 / H37Rv)</name>
    <dbReference type="NCBI Taxonomy" id="83332"/>
    <lineage>
        <taxon>Bacteria</taxon>
        <taxon>Bacillati</taxon>
        <taxon>Actinomycetota</taxon>
        <taxon>Actinomycetes</taxon>
        <taxon>Mycobacteriales</taxon>
        <taxon>Mycobacteriaceae</taxon>
        <taxon>Mycobacterium</taxon>
        <taxon>Mycobacterium tuberculosis complex</taxon>
    </lineage>
</organism>
<comment type="function">
    <text evidence="2">Toxic component of a type II toxin-antitoxin (TA) system. An RNase. Its cognate antitoxin is VapB51.</text>
</comment>
<comment type="cofactor">
    <cofactor evidence="2">
        <name>Mg(2+)</name>
        <dbReference type="ChEBI" id="CHEBI:18420"/>
    </cofactor>
</comment>
<comment type="similarity">
    <text evidence="2">Belongs to the PINc/VapC protein family.</text>
</comment>
<comment type="sequence caution" evidence="2">
    <conflict type="erroneous initiation">
        <sequence resource="EMBL-CDS" id="CCP42957"/>
    </conflict>
    <text>Extended N-terminus.</text>
</comment>
<keyword id="KW-0378">Hydrolase</keyword>
<keyword id="KW-0460">Magnesium</keyword>
<keyword id="KW-0479">Metal-binding</keyword>
<keyword id="KW-0540">Nuclease</keyword>
<keyword id="KW-1185">Reference proteome</keyword>
<keyword id="KW-1277">Toxin-antitoxin system</keyword>
<gene>
    <name evidence="2" type="primary">vapC51</name>
    <name type="ordered locus">Rv0229c</name>
    <name type="ordered locus">RVBD_0229c</name>
    <name type="ORF">P425_00238</name>
</gene>